<evidence type="ECO:0000255" key="1">
    <source>
        <dbReference type="HAMAP-Rule" id="MF_01445"/>
    </source>
</evidence>
<protein>
    <recommendedName>
        <fullName evidence="1">tRNA N6-adenosine threonylcarbamoyltransferase</fullName>
        <ecNumber evidence="1">2.3.1.234</ecNumber>
    </recommendedName>
    <alternativeName>
        <fullName evidence="1">N6-L-threonylcarbamoyladenine synthase</fullName>
        <shortName evidence="1">t(6)A synthase</shortName>
    </alternativeName>
    <alternativeName>
        <fullName evidence="1">t(6)A37 threonylcarbamoyladenosine biosynthesis protein TsaD</fullName>
    </alternativeName>
    <alternativeName>
        <fullName evidence="1">tRNA threonylcarbamoyladenosine biosynthesis protein TsaD</fullName>
    </alternativeName>
</protein>
<accession>B7H0A7</accession>
<gene>
    <name evidence="1" type="primary">tsaD</name>
    <name type="synonym">gcp</name>
    <name type="ordered locus">ABBFA_001196</name>
</gene>
<proteinExistence type="inferred from homology"/>
<keyword id="KW-0012">Acyltransferase</keyword>
<keyword id="KW-0963">Cytoplasm</keyword>
<keyword id="KW-0408">Iron</keyword>
<keyword id="KW-0479">Metal-binding</keyword>
<keyword id="KW-0808">Transferase</keyword>
<keyword id="KW-0819">tRNA processing</keyword>
<comment type="function">
    <text evidence="1">Required for the formation of a threonylcarbamoyl group on adenosine at position 37 (t(6)A37) in tRNAs that read codons beginning with adenine. Is involved in the transfer of the threonylcarbamoyl moiety of threonylcarbamoyl-AMP (TC-AMP) to the N6 group of A37, together with TsaE and TsaB. TsaD likely plays a direct catalytic role in this reaction.</text>
</comment>
<comment type="catalytic activity">
    <reaction evidence="1">
        <text>L-threonylcarbamoyladenylate + adenosine(37) in tRNA = N(6)-L-threonylcarbamoyladenosine(37) in tRNA + AMP + H(+)</text>
        <dbReference type="Rhea" id="RHEA:37059"/>
        <dbReference type="Rhea" id="RHEA-COMP:10162"/>
        <dbReference type="Rhea" id="RHEA-COMP:10163"/>
        <dbReference type="ChEBI" id="CHEBI:15378"/>
        <dbReference type="ChEBI" id="CHEBI:73682"/>
        <dbReference type="ChEBI" id="CHEBI:74411"/>
        <dbReference type="ChEBI" id="CHEBI:74418"/>
        <dbReference type="ChEBI" id="CHEBI:456215"/>
        <dbReference type="EC" id="2.3.1.234"/>
    </reaction>
</comment>
<comment type="cofactor">
    <cofactor evidence="1">
        <name>Fe(2+)</name>
        <dbReference type="ChEBI" id="CHEBI:29033"/>
    </cofactor>
    <text evidence="1">Binds 1 Fe(2+) ion per subunit.</text>
</comment>
<comment type="subcellular location">
    <subcellularLocation>
        <location evidence="1">Cytoplasm</location>
    </subcellularLocation>
</comment>
<comment type="similarity">
    <text evidence="1">Belongs to the KAE1 / TsaD family.</text>
</comment>
<feature type="chain" id="PRO_1000145938" description="tRNA N6-adenosine threonylcarbamoyltransferase">
    <location>
        <begin position="1"/>
        <end position="336"/>
    </location>
</feature>
<feature type="binding site" evidence="1">
    <location>
        <position position="111"/>
    </location>
    <ligand>
        <name>Fe cation</name>
        <dbReference type="ChEBI" id="CHEBI:24875"/>
    </ligand>
</feature>
<feature type="binding site" evidence="1">
    <location>
        <position position="115"/>
    </location>
    <ligand>
        <name>Fe cation</name>
        <dbReference type="ChEBI" id="CHEBI:24875"/>
    </ligand>
</feature>
<feature type="binding site" evidence="1">
    <location>
        <begin position="134"/>
        <end position="138"/>
    </location>
    <ligand>
        <name>substrate</name>
    </ligand>
</feature>
<feature type="binding site" evidence="1">
    <location>
        <position position="167"/>
    </location>
    <ligand>
        <name>substrate</name>
    </ligand>
</feature>
<feature type="binding site" evidence="1">
    <location>
        <position position="180"/>
    </location>
    <ligand>
        <name>substrate</name>
    </ligand>
</feature>
<feature type="binding site" evidence="1">
    <location>
        <position position="270"/>
    </location>
    <ligand>
        <name>substrate</name>
    </ligand>
</feature>
<feature type="binding site" evidence="1">
    <location>
        <position position="298"/>
    </location>
    <ligand>
        <name>Fe cation</name>
        <dbReference type="ChEBI" id="CHEBI:24875"/>
    </ligand>
</feature>
<reference key="1">
    <citation type="journal article" date="2008" name="J. Bacteriol.">
        <title>Comparative genome sequence analysis of multidrug-resistant Acinetobacter baumannii.</title>
        <authorList>
            <person name="Adams M.D."/>
            <person name="Goglin K."/>
            <person name="Molyneaux N."/>
            <person name="Hujer K.M."/>
            <person name="Lavender H."/>
            <person name="Jamison J.J."/>
            <person name="MacDonald I.J."/>
            <person name="Martin K.M."/>
            <person name="Russo T."/>
            <person name="Campagnari A.A."/>
            <person name="Hujer A.M."/>
            <person name="Bonomo R.A."/>
            <person name="Gill S.R."/>
        </authorList>
    </citation>
    <scope>NUCLEOTIDE SEQUENCE [LARGE SCALE GENOMIC DNA]</scope>
    <source>
        <strain>AB307-0294</strain>
    </source>
</reference>
<sequence>MIVLGLETSCDETGLALYDSELGLRGQVLYSQIKLHAEYGGVVPELASRDHVRKLIPLMNQLLEQSGVKKQEIDAVAYTRGPGLMGALMTGALFGRTLAFSLNKPAIGVHHMEGHMLAPLLSSQPPEFPFVALLVSGGHTQLMAAHGIGQYELLGESIDDAAGEAFDKVAKMMNLPYPGGPNIAKLALSGDPLAFEFPRPMLHQGLDFSFSGLKTAVSVQLKKLNGENRDADIAASFQEAIVDTLVKKSVKALKQTGLKRLVIAGGVSANLRLREQLETSLAKIKAQVYYAEPALCTDNGAMIAFAGYQRLKAGQHDGLAVTTTPRWPMTELTIPE</sequence>
<organism>
    <name type="scientific">Acinetobacter baumannii (strain AB307-0294)</name>
    <dbReference type="NCBI Taxonomy" id="557600"/>
    <lineage>
        <taxon>Bacteria</taxon>
        <taxon>Pseudomonadati</taxon>
        <taxon>Pseudomonadota</taxon>
        <taxon>Gammaproteobacteria</taxon>
        <taxon>Moraxellales</taxon>
        <taxon>Moraxellaceae</taxon>
        <taxon>Acinetobacter</taxon>
        <taxon>Acinetobacter calcoaceticus/baumannii complex</taxon>
    </lineage>
</organism>
<dbReference type="EC" id="2.3.1.234" evidence="1"/>
<dbReference type="EMBL" id="CP001172">
    <property type="protein sequence ID" value="ACJ58505.1"/>
    <property type="molecule type" value="Genomic_DNA"/>
</dbReference>
<dbReference type="RefSeq" id="WP_000636263.1">
    <property type="nucleotide sequence ID" value="NZ_CP001172.1"/>
</dbReference>
<dbReference type="SMR" id="B7H0A7"/>
<dbReference type="GeneID" id="92894503"/>
<dbReference type="HOGENOM" id="CLU_023208_0_0_6"/>
<dbReference type="Proteomes" id="UP000006924">
    <property type="component" value="Chromosome"/>
</dbReference>
<dbReference type="GO" id="GO:0005737">
    <property type="term" value="C:cytoplasm"/>
    <property type="evidence" value="ECO:0007669"/>
    <property type="project" value="UniProtKB-SubCell"/>
</dbReference>
<dbReference type="GO" id="GO:0005506">
    <property type="term" value="F:iron ion binding"/>
    <property type="evidence" value="ECO:0007669"/>
    <property type="project" value="UniProtKB-UniRule"/>
</dbReference>
<dbReference type="GO" id="GO:0061711">
    <property type="term" value="F:N(6)-L-threonylcarbamoyladenine synthase activity"/>
    <property type="evidence" value="ECO:0007669"/>
    <property type="project" value="UniProtKB-EC"/>
</dbReference>
<dbReference type="GO" id="GO:0002949">
    <property type="term" value="P:tRNA threonylcarbamoyladenosine modification"/>
    <property type="evidence" value="ECO:0007669"/>
    <property type="project" value="UniProtKB-UniRule"/>
</dbReference>
<dbReference type="CDD" id="cd24133">
    <property type="entry name" value="ASKHA_NBD_TsaD_bac"/>
    <property type="match status" value="1"/>
</dbReference>
<dbReference type="FunFam" id="3.30.420.40:FF:000040">
    <property type="entry name" value="tRNA N6-adenosine threonylcarbamoyltransferase"/>
    <property type="match status" value="1"/>
</dbReference>
<dbReference type="Gene3D" id="3.30.420.40">
    <property type="match status" value="2"/>
</dbReference>
<dbReference type="HAMAP" id="MF_01445">
    <property type="entry name" value="TsaD"/>
    <property type="match status" value="1"/>
</dbReference>
<dbReference type="InterPro" id="IPR043129">
    <property type="entry name" value="ATPase_NBD"/>
</dbReference>
<dbReference type="InterPro" id="IPR000905">
    <property type="entry name" value="Gcp-like_dom"/>
</dbReference>
<dbReference type="InterPro" id="IPR017861">
    <property type="entry name" value="KAE1/TsaD"/>
</dbReference>
<dbReference type="InterPro" id="IPR017860">
    <property type="entry name" value="Peptidase_M22_CS"/>
</dbReference>
<dbReference type="InterPro" id="IPR022450">
    <property type="entry name" value="TsaD"/>
</dbReference>
<dbReference type="NCBIfam" id="TIGR00329">
    <property type="entry name" value="gcp_kae1"/>
    <property type="match status" value="1"/>
</dbReference>
<dbReference type="NCBIfam" id="TIGR03723">
    <property type="entry name" value="T6A_TsaD_YgjD"/>
    <property type="match status" value="1"/>
</dbReference>
<dbReference type="PANTHER" id="PTHR11735">
    <property type="entry name" value="TRNA N6-ADENOSINE THREONYLCARBAMOYLTRANSFERASE"/>
    <property type="match status" value="1"/>
</dbReference>
<dbReference type="PANTHER" id="PTHR11735:SF6">
    <property type="entry name" value="TRNA N6-ADENOSINE THREONYLCARBAMOYLTRANSFERASE, MITOCHONDRIAL"/>
    <property type="match status" value="1"/>
</dbReference>
<dbReference type="Pfam" id="PF00814">
    <property type="entry name" value="TsaD"/>
    <property type="match status" value="1"/>
</dbReference>
<dbReference type="PRINTS" id="PR00789">
    <property type="entry name" value="OSIALOPTASE"/>
</dbReference>
<dbReference type="SUPFAM" id="SSF53067">
    <property type="entry name" value="Actin-like ATPase domain"/>
    <property type="match status" value="2"/>
</dbReference>
<dbReference type="PROSITE" id="PS01016">
    <property type="entry name" value="GLYCOPROTEASE"/>
    <property type="match status" value="1"/>
</dbReference>
<name>TSAD_ACIB3</name>